<accession>P24299</accession>
<sequence length="391" mass="43421">MNYQPTPEDRFTFGLWTVGWEGRDPFGDATRTALDPVESVRRLAELGAHGVTFHDDDLIPFGSSDSERYEHVKRFRQALDDTGMKVPMATTNLFTHPVFKDGGFTANDRDVRRYALRKTIRNIDLAVELGAETYVAWGGREGAESGGAKDVRDALDRMKEAFDLLGEYVTSQGYDIRFAIEPKPNEPRGDILLPTVGHALAFIERLERPELYGVNPEVGHEQMAGLNFPHGIAQALWAGKLFHIDLNGQNGIKYDQDLRFGAGDLRAAFWLVDLLESAGYSGPRHFDFKPPRTEDFDGVWASAAGCMRNYLILKERAAAFRADPEVQEALRASRLDELARPTAADGLQALLDDRSAFEEFDVDAAAARGMAFERLDQLAMDHLLGARGAAA</sequence>
<evidence type="ECO:0000250" key="1"/>
<evidence type="ECO:0000305" key="2"/>
<evidence type="ECO:0007829" key="3">
    <source>
        <dbReference type="PDB" id="6XIA"/>
    </source>
</evidence>
<protein>
    <recommendedName>
        <fullName>Xylose isomerase</fullName>
        <ecNumber>5.3.1.5</ecNumber>
    </recommendedName>
</protein>
<dbReference type="EC" id="5.3.1.5"/>
<dbReference type="PDB" id="6XIA">
    <property type="method" value="X-ray"/>
    <property type="resolution" value="1.65 A"/>
    <property type="chains" value="A=2-388"/>
</dbReference>
<dbReference type="PDBsum" id="6XIA"/>
<dbReference type="SMR" id="P24299"/>
<dbReference type="EvolutionaryTrace" id="P24299"/>
<dbReference type="GO" id="GO:0005737">
    <property type="term" value="C:cytoplasm"/>
    <property type="evidence" value="ECO:0007669"/>
    <property type="project" value="UniProtKB-SubCell"/>
</dbReference>
<dbReference type="GO" id="GO:0000287">
    <property type="term" value="F:magnesium ion binding"/>
    <property type="evidence" value="ECO:0007669"/>
    <property type="project" value="UniProtKB-UniRule"/>
</dbReference>
<dbReference type="GO" id="GO:0009045">
    <property type="term" value="F:xylose isomerase activity"/>
    <property type="evidence" value="ECO:0007669"/>
    <property type="project" value="UniProtKB-UniRule"/>
</dbReference>
<dbReference type="GO" id="GO:0042732">
    <property type="term" value="P:D-xylose metabolic process"/>
    <property type="evidence" value="ECO:0007669"/>
    <property type="project" value="UniProtKB-UniRule"/>
</dbReference>
<dbReference type="FunFam" id="3.20.20.150:FF:000009">
    <property type="entry name" value="Xylose isomerase"/>
    <property type="match status" value="1"/>
</dbReference>
<dbReference type="Gene3D" id="3.20.20.150">
    <property type="entry name" value="Divalent-metal-dependent TIM barrel enzymes"/>
    <property type="match status" value="1"/>
</dbReference>
<dbReference type="HAMAP" id="MF_00455">
    <property type="entry name" value="Xylose_isom_A"/>
    <property type="match status" value="1"/>
</dbReference>
<dbReference type="InterPro" id="IPR036237">
    <property type="entry name" value="Xyl_isomerase-like_sf"/>
</dbReference>
<dbReference type="InterPro" id="IPR013022">
    <property type="entry name" value="Xyl_isomerase-like_TIM-brl"/>
</dbReference>
<dbReference type="InterPro" id="IPR013453">
    <property type="entry name" value="XylA_actinobac"/>
</dbReference>
<dbReference type="InterPro" id="IPR001998">
    <property type="entry name" value="Xylose_isomerase"/>
</dbReference>
<dbReference type="NCBIfam" id="TIGR02631">
    <property type="entry name" value="xylA_Arthro"/>
    <property type="match status" value="1"/>
</dbReference>
<dbReference type="PANTHER" id="PTHR48408">
    <property type="match status" value="1"/>
</dbReference>
<dbReference type="PANTHER" id="PTHR48408:SF1">
    <property type="entry name" value="XYLOSE ISOMERASE"/>
    <property type="match status" value="1"/>
</dbReference>
<dbReference type="Pfam" id="PF01261">
    <property type="entry name" value="AP_endonuc_2"/>
    <property type="match status" value="1"/>
</dbReference>
<dbReference type="PRINTS" id="PR00688">
    <property type="entry name" value="XYLOSISMRASE"/>
</dbReference>
<dbReference type="SUPFAM" id="SSF51658">
    <property type="entry name" value="Xylose isomerase-like"/>
    <property type="match status" value="1"/>
</dbReference>
<dbReference type="PROSITE" id="PS51415">
    <property type="entry name" value="XYLOSE_ISOMERASE"/>
    <property type="match status" value="1"/>
</dbReference>
<name>XYLA_STRAL</name>
<comment type="function">
    <text>Involved in D-xylose catabolism.</text>
</comment>
<comment type="catalytic activity">
    <reaction>
        <text>alpha-D-xylose = alpha-D-xylulofuranose</text>
        <dbReference type="Rhea" id="RHEA:22816"/>
        <dbReference type="ChEBI" id="CHEBI:28518"/>
        <dbReference type="ChEBI" id="CHEBI:188998"/>
        <dbReference type="EC" id="5.3.1.5"/>
    </reaction>
</comment>
<comment type="cofactor">
    <cofactor>
        <name>Mg(2+)</name>
        <dbReference type="ChEBI" id="CHEBI:18420"/>
    </cofactor>
    <text>Binds 2 magnesium ions per subunit.</text>
</comment>
<comment type="subunit">
    <text>Homotetramer.</text>
</comment>
<comment type="subcellular location">
    <subcellularLocation>
        <location>Cytoplasm</location>
    </subcellularLocation>
</comment>
<comment type="similarity">
    <text evidence="2">Belongs to the xylose isomerase family.</text>
</comment>
<gene>
    <name type="primary">xylA</name>
</gene>
<proteinExistence type="evidence at protein level"/>
<feature type="initiator methionine" description="Removed">
    <location>
        <position position="1"/>
    </location>
</feature>
<feature type="chain" id="PRO_0000195795" description="Xylose isomerase">
    <location>
        <begin position="2"/>
        <end position="391"/>
    </location>
</feature>
<feature type="active site" evidence="1">
    <location>
        <position position="54"/>
    </location>
</feature>
<feature type="active site" evidence="1">
    <location>
        <position position="57"/>
    </location>
</feature>
<feature type="binding site">
    <location>
        <position position="181"/>
    </location>
    <ligand>
        <name>Mg(2+)</name>
        <dbReference type="ChEBI" id="CHEBI:18420"/>
        <label>1</label>
    </ligand>
</feature>
<feature type="binding site">
    <location>
        <position position="217"/>
    </location>
    <ligand>
        <name>Mg(2+)</name>
        <dbReference type="ChEBI" id="CHEBI:18420"/>
        <label>1</label>
    </ligand>
</feature>
<feature type="binding site">
    <location>
        <position position="217"/>
    </location>
    <ligand>
        <name>Mg(2+)</name>
        <dbReference type="ChEBI" id="CHEBI:18420"/>
        <label>2</label>
    </ligand>
</feature>
<feature type="binding site">
    <location>
        <position position="220"/>
    </location>
    <ligand>
        <name>Mg(2+)</name>
        <dbReference type="ChEBI" id="CHEBI:18420"/>
        <label>2</label>
    </ligand>
</feature>
<feature type="binding site">
    <location>
        <position position="245"/>
    </location>
    <ligand>
        <name>Mg(2+)</name>
        <dbReference type="ChEBI" id="CHEBI:18420"/>
        <label>1</label>
    </ligand>
</feature>
<feature type="binding site">
    <location>
        <position position="255"/>
    </location>
    <ligand>
        <name>Mg(2+)</name>
        <dbReference type="ChEBI" id="CHEBI:18420"/>
        <label>2</label>
    </ligand>
</feature>
<feature type="binding site">
    <location>
        <position position="257"/>
    </location>
    <ligand>
        <name>Mg(2+)</name>
        <dbReference type="ChEBI" id="CHEBI:18420"/>
        <label>2</label>
    </ligand>
</feature>
<feature type="binding site">
    <location>
        <position position="287"/>
    </location>
    <ligand>
        <name>Mg(2+)</name>
        <dbReference type="ChEBI" id="CHEBI:18420"/>
        <label>1</label>
    </ligand>
</feature>
<feature type="helix" evidence="3">
    <location>
        <begin position="7"/>
        <end position="9"/>
    </location>
</feature>
<feature type="strand" evidence="3">
    <location>
        <begin position="11"/>
        <end position="14"/>
    </location>
</feature>
<feature type="helix" evidence="3">
    <location>
        <begin position="15"/>
        <end position="18"/>
    </location>
</feature>
<feature type="helix" evidence="3">
    <location>
        <begin position="36"/>
        <end position="46"/>
    </location>
</feature>
<feature type="strand" evidence="3">
    <location>
        <begin position="50"/>
        <end position="54"/>
    </location>
</feature>
<feature type="helix" evidence="3">
    <location>
        <begin position="55"/>
        <end position="58"/>
    </location>
</feature>
<feature type="helix" evidence="3">
    <location>
        <begin position="65"/>
        <end position="82"/>
    </location>
</feature>
<feature type="strand" evidence="3">
    <location>
        <begin position="88"/>
        <end position="90"/>
    </location>
</feature>
<feature type="strand" evidence="3">
    <location>
        <begin position="94"/>
        <end position="96"/>
    </location>
</feature>
<feature type="helix" evidence="3">
    <location>
        <begin position="97"/>
        <end position="99"/>
    </location>
</feature>
<feature type="helix" evidence="3">
    <location>
        <begin position="109"/>
        <end position="128"/>
    </location>
</feature>
<feature type="strand" evidence="3">
    <location>
        <begin position="132"/>
        <end position="136"/>
    </location>
</feature>
<feature type="strand" evidence="3">
    <location>
        <begin position="142"/>
        <end position="145"/>
    </location>
</feature>
<feature type="helix" evidence="3">
    <location>
        <begin position="146"/>
        <end position="148"/>
    </location>
</feature>
<feature type="helix" evidence="3">
    <location>
        <begin position="151"/>
        <end position="172"/>
    </location>
</feature>
<feature type="strand" evidence="3">
    <location>
        <begin position="177"/>
        <end position="180"/>
    </location>
</feature>
<feature type="strand" evidence="3">
    <location>
        <begin position="184"/>
        <end position="193"/>
    </location>
</feature>
<feature type="helix" evidence="3">
    <location>
        <begin position="196"/>
        <end position="203"/>
    </location>
</feature>
<feature type="strand" evidence="3">
    <location>
        <begin position="206"/>
        <end position="208"/>
    </location>
</feature>
<feature type="helix" evidence="3">
    <location>
        <begin position="209"/>
        <end position="211"/>
    </location>
</feature>
<feature type="strand" evidence="3">
    <location>
        <begin position="212"/>
        <end position="214"/>
    </location>
</feature>
<feature type="helix" evidence="3">
    <location>
        <begin position="218"/>
        <end position="222"/>
    </location>
</feature>
<feature type="turn" evidence="3">
    <location>
        <begin position="223"/>
        <end position="225"/>
    </location>
</feature>
<feature type="helix" evidence="3">
    <location>
        <begin position="228"/>
        <end position="237"/>
    </location>
</feature>
<feature type="strand" evidence="3">
    <location>
        <begin position="251"/>
        <end position="254"/>
    </location>
</feature>
<feature type="helix" evidence="3">
    <location>
        <begin position="265"/>
        <end position="277"/>
    </location>
</feature>
<feature type="strand" evidence="3">
    <location>
        <begin position="284"/>
        <end position="286"/>
    </location>
</feature>
<feature type="helix" evidence="3">
    <location>
        <begin position="296"/>
        <end position="322"/>
    </location>
</feature>
<feature type="helix" evidence="3">
    <location>
        <begin position="324"/>
        <end position="332"/>
    </location>
</feature>
<feature type="helix" evidence="3">
    <location>
        <begin position="335"/>
        <end position="338"/>
    </location>
</feature>
<feature type="helix" evidence="3">
    <location>
        <begin position="347"/>
        <end position="352"/>
    </location>
</feature>
<feature type="helix" evidence="3">
    <location>
        <begin position="354"/>
        <end position="356"/>
    </location>
</feature>
<feature type="turn" evidence="3">
    <location>
        <begin position="357"/>
        <end position="359"/>
    </location>
</feature>
<feature type="helix" evidence="3">
    <location>
        <begin position="362"/>
        <end position="367"/>
    </location>
</feature>
<feature type="helix" evidence="3">
    <location>
        <begin position="372"/>
        <end position="384"/>
    </location>
</feature>
<keyword id="KW-0002">3D-structure</keyword>
<keyword id="KW-0119">Carbohydrate metabolism</keyword>
<keyword id="KW-0963">Cytoplasm</keyword>
<keyword id="KW-0413">Isomerase</keyword>
<keyword id="KW-0460">Magnesium</keyword>
<keyword id="KW-0479">Metal-binding</keyword>
<keyword id="KW-0859">Xylose metabolism</keyword>
<reference key="1">
    <citation type="journal article" date="1989" name="FEBS Lett.">
        <title>Crystallisation and preliminary analysis of glucose isomerase from Streptomyces albus.</title>
        <authorList>
            <person name="Dauter Z."/>
            <person name="Dauter M."/>
            <person name="Hemker J."/>
            <person name="Witzel H."/>
            <person name="Wilson K.S."/>
        </authorList>
    </citation>
    <scope>CRYSTALLIZATION</scope>
</reference>
<reference key="2">
    <citation type="journal article" date="1990" name="Acta Crystallogr. B">
        <title>Refinement of glucose isomerase from Streptomyces albus at 1.65 A with data from an imaging plate.</title>
        <authorList>
            <person name="Dauter Z."/>
            <person name="Terry H."/>
            <person name="Witzel H."/>
            <person name="Wilson K.S."/>
        </authorList>
    </citation>
    <scope>X-RAY CRYSTALLOGRAPHY (1.65 ANGSTROMS)</scope>
</reference>
<organism>
    <name type="scientific">Streptomyces albus G</name>
    <dbReference type="NCBI Taxonomy" id="1962"/>
    <lineage>
        <taxon>Bacteria</taxon>
        <taxon>Bacillati</taxon>
        <taxon>Actinomycetota</taxon>
        <taxon>Actinomycetes</taxon>
        <taxon>Kitasatosporales</taxon>
        <taxon>Streptomycetaceae</taxon>
        <taxon>Streptomyces</taxon>
    </lineage>
</organism>